<keyword id="KW-0067">ATP-binding</keyword>
<keyword id="KW-0436">Ligase</keyword>
<keyword id="KW-0460">Magnesium</keyword>
<keyword id="KW-0479">Metal-binding</keyword>
<keyword id="KW-0520">NAD</keyword>
<keyword id="KW-0547">Nucleotide-binding</keyword>
<keyword id="KW-1185">Reference proteome</keyword>
<accession>B5ZA97</accession>
<comment type="function">
    <text evidence="1">Catalyzes the ATP-dependent amidation of deamido-NAD to form NAD. Uses ammonia as a nitrogen source.</text>
</comment>
<comment type="catalytic activity">
    <reaction evidence="1">
        <text>deamido-NAD(+) + NH4(+) + ATP = AMP + diphosphate + NAD(+) + H(+)</text>
        <dbReference type="Rhea" id="RHEA:21188"/>
        <dbReference type="ChEBI" id="CHEBI:15378"/>
        <dbReference type="ChEBI" id="CHEBI:28938"/>
        <dbReference type="ChEBI" id="CHEBI:30616"/>
        <dbReference type="ChEBI" id="CHEBI:33019"/>
        <dbReference type="ChEBI" id="CHEBI:57540"/>
        <dbReference type="ChEBI" id="CHEBI:58437"/>
        <dbReference type="ChEBI" id="CHEBI:456215"/>
        <dbReference type="EC" id="6.3.1.5"/>
    </reaction>
</comment>
<comment type="pathway">
    <text evidence="1">Cofactor biosynthesis; NAD(+) biosynthesis; NAD(+) from deamido-NAD(+) (ammonia route): step 1/1.</text>
</comment>
<comment type="subunit">
    <text evidence="1">Homodimer.</text>
</comment>
<comment type="similarity">
    <text evidence="1">Belongs to the NAD synthetase family.</text>
</comment>
<reference key="1">
    <citation type="journal article" date="2009" name="J. Bacteriol.">
        <title>The complete genome sequence of Helicobacter pylori strain G27.</title>
        <authorList>
            <person name="Baltrus D.A."/>
            <person name="Amieva M.R."/>
            <person name="Covacci A."/>
            <person name="Lowe T.M."/>
            <person name="Merrell D.S."/>
            <person name="Ottemann K.M."/>
            <person name="Stein M."/>
            <person name="Salama N.R."/>
            <person name="Guillemin K."/>
        </authorList>
    </citation>
    <scope>NUCLEOTIDE SEQUENCE [LARGE SCALE GENOMIC DNA]</scope>
    <source>
        <strain>G27</strain>
    </source>
</reference>
<protein>
    <recommendedName>
        <fullName evidence="1">NH(3)-dependent NAD(+) synthetase</fullName>
        <ecNumber evidence="1">6.3.1.5</ecNumber>
    </recommendedName>
</protein>
<proteinExistence type="inferred from homology"/>
<name>NADE_HELPG</name>
<organism>
    <name type="scientific">Helicobacter pylori (strain G27)</name>
    <dbReference type="NCBI Taxonomy" id="563041"/>
    <lineage>
        <taxon>Bacteria</taxon>
        <taxon>Pseudomonadati</taxon>
        <taxon>Campylobacterota</taxon>
        <taxon>Epsilonproteobacteria</taxon>
        <taxon>Campylobacterales</taxon>
        <taxon>Helicobacteraceae</taxon>
        <taxon>Helicobacter</taxon>
    </lineage>
</organism>
<feature type="chain" id="PRO_1000099026" description="NH(3)-dependent NAD(+) synthetase">
    <location>
        <begin position="1"/>
        <end position="260"/>
    </location>
</feature>
<feature type="binding site" evidence="1">
    <location>
        <begin position="31"/>
        <end position="38"/>
    </location>
    <ligand>
        <name>ATP</name>
        <dbReference type="ChEBI" id="CHEBI:30616"/>
    </ligand>
</feature>
<feature type="binding site" evidence="1">
    <location>
        <position position="37"/>
    </location>
    <ligand>
        <name>Mg(2+)</name>
        <dbReference type="ChEBI" id="CHEBI:18420"/>
    </ligand>
</feature>
<feature type="binding site" evidence="1">
    <location>
        <position position="112"/>
    </location>
    <ligand>
        <name>deamido-NAD(+)</name>
        <dbReference type="ChEBI" id="CHEBI:58437"/>
    </ligand>
</feature>
<feature type="binding site" evidence="1">
    <location>
        <position position="132"/>
    </location>
    <ligand>
        <name>ATP</name>
        <dbReference type="ChEBI" id="CHEBI:30616"/>
    </ligand>
</feature>
<feature type="binding site" evidence="1">
    <location>
        <position position="137"/>
    </location>
    <ligand>
        <name>Mg(2+)</name>
        <dbReference type="ChEBI" id="CHEBI:18420"/>
    </ligand>
</feature>
<feature type="binding site" evidence="1">
    <location>
        <position position="161"/>
    </location>
    <ligand>
        <name>ATP</name>
        <dbReference type="ChEBI" id="CHEBI:30616"/>
    </ligand>
</feature>
<feature type="binding site" evidence="1">
    <location>
        <position position="183"/>
    </location>
    <ligand>
        <name>ATP</name>
        <dbReference type="ChEBI" id="CHEBI:30616"/>
    </ligand>
</feature>
<dbReference type="EC" id="6.3.1.5" evidence="1"/>
<dbReference type="EMBL" id="CP001173">
    <property type="protein sequence ID" value="ACI27077.1"/>
    <property type="molecule type" value="Genomic_DNA"/>
</dbReference>
<dbReference type="RefSeq" id="WP_001168289.1">
    <property type="nucleotide sequence ID" value="NC_011333.1"/>
</dbReference>
<dbReference type="SMR" id="B5ZA97"/>
<dbReference type="KEGG" id="hpg:HPG27_311"/>
<dbReference type="HOGENOM" id="CLU_059327_1_2_7"/>
<dbReference type="UniPathway" id="UPA00253">
    <property type="reaction ID" value="UER00333"/>
</dbReference>
<dbReference type="Proteomes" id="UP000001735">
    <property type="component" value="Chromosome"/>
</dbReference>
<dbReference type="GO" id="GO:0005737">
    <property type="term" value="C:cytoplasm"/>
    <property type="evidence" value="ECO:0007669"/>
    <property type="project" value="InterPro"/>
</dbReference>
<dbReference type="GO" id="GO:0005524">
    <property type="term" value="F:ATP binding"/>
    <property type="evidence" value="ECO:0007669"/>
    <property type="project" value="UniProtKB-UniRule"/>
</dbReference>
<dbReference type="GO" id="GO:0004359">
    <property type="term" value="F:glutaminase activity"/>
    <property type="evidence" value="ECO:0007669"/>
    <property type="project" value="InterPro"/>
</dbReference>
<dbReference type="GO" id="GO:0046872">
    <property type="term" value="F:metal ion binding"/>
    <property type="evidence" value="ECO:0007669"/>
    <property type="project" value="UniProtKB-KW"/>
</dbReference>
<dbReference type="GO" id="GO:0003952">
    <property type="term" value="F:NAD+ synthase (glutamine-hydrolyzing) activity"/>
    <property type="evidence" value="ECO:0007669"/>
    <property type="project" value="InterPro"/>
</dbReference>
<dbReference type="GO" id="GO:0008795">
    <property type="term" value="F:NAD+ synthase activity"/>
    <property type="evidence" value="ECO:0007669"/>
    <property type="project" value="UniProtKB-UniRule"/>
</dbReference>
<dbReference type="GO" id="GO:0009435">
    <property type="term" value="P:NAD biosynthetic process"/>
    <property type="evidence" value="ECO:0007669"/>
    <property type="project" value="UniProtKB-UniRule"/>
</dbReference>
<dbReference type="CDD" id="cd00553">
    <property type="entry name" value="NAD_synthase"/>
    <property type="match status" value="1"/>
</dbReference>
<dbReference type="FunFam" id="3.40.50.620:FF:000106">
    <property type="entry name" value="Glutamine-dependent NAD(+) synthetase"/>
    <property type="match status" value="1"/>
</dbReference>
<dbReference type="Gene3D" id="3.40.50.620">
    <property type="entry name" value="HUPs"/>
    <property type="match status" value="1"/>
</dbReference>
<dbReference type="HAMAP" id="MF_00193">
    <property type="entry name" value="NadE_ammonia_dep"/>
    <property type="match status" value="1"/>
</dbReference>
<dbReference type="InterPro" id="IPR022310">
    <property type="entry name" value="NAD/GMP_synthase"/>
</dbReference>
<dbReference type="InterPro" id="IPR003694">
    <property type="entry name" value="NAD_synthase"/>
</dbReference>
<dbReference type="InterPro" id="IPR022926">
    <property type="entry name" value="NH(3)-dep_NAD(+)_synth"/>
</dbReference>
<dbReference type="InterPro" id="IPR014729">
    <property type="entry name" value="Rossmann-like_a/b/a_fold"/>
</dbReference>
<dbReference type="NCBIfam" id="TIGR00552">
    <property type="entry name" value="nadE"/>
    <property type="match status" value="1"/>
</dbReference>
<dbReference type="NCBIfam" id="NF010587">
    <property type="entry name" value="PRK13980.1"/>
    <property type="match status" value="1"/>
</dbReference>
<dbReference type="PANTHER" id="PTHR23090:SF9">
    <property type="entry name" value="GLUTAMINE-DEPENDENT NAD(+) SYNTHETASE"/>
    <property type="match status" value="1"/>
</dbReference>
<dbReference type="PANTHER" id="PTHR23090">
    <property type="entry name" value="NH 3 /GLUTAMINE-DEPENDENT NAD + SYNTHETASE"/>
    <property type="match status" value="1"/>
</dbReference>
<dbReference type="Pfam" id="PF02540">
    <property type="entry name" value="NAD_synthase"/>
    <property type="match status" value="1"/>
</dbReference>
<dbReference type="SUPFAM" id="SSF52402">
    <property type="entry name" value="Adenine nucleotide alpha hydrolases-like"/>
    <property type="match status" value="1"/>
</dbReference>
<sequence>MQKDYQKLIVYLCDFLEKEAQKRGFKKVVYGLSGGLDSAVVGVLCQKVFKENAHALLMPSSVSMPESKTDALNLCETFSIPYTEYSIAPYDKIFGSHFKDASLTRKGNFCARLRMAFLYDYSLKSDSLVIGTSNKSERILGYGTLFGDLACAINPIGELFKTEVYELAYYLNIPKKILNKPPSADLFVGQSDEKDLGYPYSVIDPLLKDIEALFQTKPIHLETLTQLGYDEILVKNIISRIQKNAFKLESPTIAKRFNPK</sequence>
<evidence type="ECO:0000255" key="1">
    <source>
        <dbReference type="HAMAP-Rule" id="MF_00193"/>
    </source>
</evidence>
<gene>
    <name evidence="1" type="primary">nadE</name>
    <name type="ordered locus">HPG27_311</name>
</gene>